<accession>B7VHI0</accession>
<organism>
    <name type="scientific">Vibrio atlanticus (strain LGP32)</name>
    <name type="common">Vibrio splendidus (strain Mel32)</name>
    <dbReference type="NCBI Taxonomy" id="575788"/>
    <lineage>
        <taxon>Bacteria</taxon>
        <taxon>Pseudomonadati</taxon>
        <taxon>Pseudomonadota</taxon>
        <taxon>Gammaproteobacteria</taxon>
        <taxon>Vibrionales</taxon>
        <taxon>Vibrionaceae</taxon>
        <taxon>Vibrio</taxon>
    </lineage>
</organism>
<sequence length="90" mass="10011">MARVTVQDAVEKVGNRFDLVLIAARRARQMQTGGKDSLVPEENDKPTVIALREIEEGLITKDVLDARERQEQQEQEAAELAAVSSIAHTR</sequence>
<evidence type="ECO:0000255" key="1">
    <source>
        <dbReference type="HAMAP-Rule" id="MF_00366"/>
    </source>
</evidence>
<evidence type="ECO:0000256" key="2">
    <source>
        <dbReference type="SAM" id="MobiDB-lite"/>
    </source>
</evidence>
<name>RPOZ_VIBA3</name>
<reference key="1">
    <citation type="submission" date="2009-02" db="EMBL/GenBank/DDBJ databases">
        <title>Vibrio splendidus str. LGP32 complete genome.</title>
        <authorList>
            <person name="Mazel D."/>
            <person name="Le Roux F."/>
        </authorList>
    </citation>
    <scope>NUCLEOTIDE SEQUENCE [LARGE SCALE GENOMIC DNA]</scope>
    <source>
        <strain>LGP32</strain>
    </source>
</reference>
<protein>
    <recommendedName>
        <fullName evidence="1">DNA-directed RNA polymerase subunit omega</fullName>
        <shortName evidence="1">RNAP omega subunit</shortName>
        <ecNumber evidence="1">2.7.7.6</ecNumber>
    </recommendedName>
    <alternativeName>
        <fullName evidence="1">RNA polymerase omega subunit</fullName>
    </alternativeName>
    <alternativeName>
        <fullName evidence="1">Transcriptase subunit omega</fullName>
    </alternativeName>
</protein>
<dbReference type="EC" id="2.7.7.6" evidence="1"/>
<dbReference type="EMBL" id="FM954972">
    <property type="protein sequence ID" value="CAV17192.1"/>
    <property type="molecule type" value="Genomic_DNA"/>
</dbReference>
<dbReference type="SMR" id="B7VHI0"/>
<dbReference type="STRING" id="575788.VS_0160"/>
<dbReference type="KEGG" id="vsp:VS_0160"/>
<dbReference type="eggNOG" id="COG1758">
    <property type="taxonomic scope" value="Bacteria"/>
</dbReference>
<dbReference type="HOGENOM" id="CLU_125406_5_3_6"/>
<dbReference type="Proteomes" id="UP000009100">
    <property type="component" value="Chromosome 1"/>
</dbReference>
<dbReference type="GO" id="GO:0000428">
    <property type="term" value="C:DNA-directed RNA polymerase complex"/>
    <property type="evidence" value="ECO:0007669"/>
    <property type="project" value="UniProtKB-KW"/>
</dbReference>
<dbReference type="GO" id="GO:0003677">
    <property type="term" value="F:DNA binding"/>
    <property type="evidence" value="ECO:0007669"/>
    <property type="project" value="UniProtKB-UniRule"/>
</dbReference>
<dbReference type="GO" id="GO:0003899">
    <property type="term" value="F:DNA-directed RNA polymerase activity"/>
    <property type="evidence" value="ECO:0007669"/>
    <property type="project" value="UniProtKB-UniRule"/>
</dbReference>
<dbReference type="GO" id="GO:0006351">
    <property type="term" value="P:DNA-templated transcription"/>
    <property type="evidence" value="ECO:0007669"/>
    <property type="project" value="UniProtKB-UniRule"/>
</dbReference>
<dbReference type="FunFam" id="3.90.940.10:FF:000001">
    <property type="entry name" value="DNA-directed RNA polymerase subunit omega"/>
    <property type="match status" value="1"/>
</dbReference>
<dbReference type="Gene3D" id="3.90.940.10">
    <property type="match status" value="1"/>
</dbReference>
<dbReference type="HAMAP" id="MF_00366">
    <property type="entry name" value="RNApol_bact_RpoZ"/>
    <property type="match status" value="1"/>
</dbReference>
<dbReference type="InterPro" id="IPR003716">
    <property type="entry name" value="DNA-dir_RNA_pol_omega"/>
</dbReference>
<dbReference type="InterPro" id="IPR006110">
    <property type="entry name" value="Pol_omega/Rpo6/RPB6"/>
</dbReference>
<dbReference type="InterPro" id="IPR036161">
    <property type="entry name" value="RPB6/omega-like_sf"/>
</dbReference>
<dbReference type="NCBIfam" id="TIGR00690">
    <property type="entry name" value="rpoZ"/>
    <property type="match status" value="1"/>
</dbReference>
<dbReference type="PANTHER" id="PTHR34476">
    <property type="entry name" value="DNA-DIRECTED RNA POLYMERASE SUBUNIT OMEGA"/>
    <property type="match status" value="1"/>
</dbReference>
<dbReference type="PANTHER" id="PTHR34476:SF1">
    <property type="entry name" value="DNA-DIRECTED RNA POLYMERASE SUBUNIT OMEGA"/>
    <property type="match status" value="1"/>
</dbReference>
<dbReference type="Pfam" id="PF01192">
    <property type="entry name" value="RNA_pol_Rpb6"/>
    <property type="match status" value="1"/>
</dbReference>
<dbReference type="SMART" id="SM01409">
    <property type="entry name" value="RNA_pol_Rpb6"/>
    <property type="match status" value="1"/>
</dbReference>
<dbReference type="SUPFAM" id="SSF63562">
    <property type="entry name" value="RPB6/omega subunit-like"/>
    <property type="match status" value="1"/>
</dbReference>
<feature type="chain" id="PRO_1000133761" description="DNA-directed RNA polymerase subunit omega">
    <location>
        <begin position="1"/>
        <end position="90"/>
    </location>
</feature>
<feature type="region of interest" description="Disordered" evidence="2">
    <location>
        <begin position="69"/>
        <end position="90"/>
    </location>
</feature>
<gene>
    <name evidence="1" type="primary">rpoZ</name>
    <name type="ordered locus">VS_0160</name>
</gene>
<comment type="function">
    <text evidence="1">Promotes RNA polymerase assembly. Latches the N- and C-terminal regions of the beta' subunit thereby facilitating its interaction with the beta and alpha subunits.</text>
</comment>
<comment type="catalytic activity">
    <reaction evidence="1">
        <text>RNA(n) + a ribonucleoside 5'-triphosphate = RNA(n+1) + diphosphate</text>
        <dbReference type="Rhea" id="RHEA:21248"/>
        <dbReference type="Rhea" id="RHEA-COMP:14527"/>
        <dbReference type="Rhea" id="RHEA-COMP:17342"/>
        <dbReference type="ChEBI" id="CHEBI:33019"/>
        <dbReference type="ChEBI" id="CHEBI:61557"/>
        <dbReference type="ChEBI" id="CHEBI:140395"/>
        <dbReference type="EC" id="2.7.7.6"/>
    </reaction>
</comment>
<comment type="subunit">
    <text evidence="1">The RNAP catalytic core consists of 2 alpha, 1 beta, 1 beta' and 1 omega subunit. When a sigma factor is associated with the core the holoenzyme is formed, which can initiate transcription.</text>
</comment>
<comment type="similarity">
    <text evidence="1">Belongs to the RNA polymerase subunit omega family.</text>
</comment>
<keyword id="KW-0240">DNA-directed RNA polymerase</keyword>
<keyword id="KW-0548">Nucleotidyltransferase</keyword>
<keyword id="KW-0804">Transcription</keyword>
<keyword id="KW-0808">Transferase</keyword>
<proteinExistence type="inferred from homology"/>